<evidence type="ECO:0000255" key="1">
    <source>
        <dbReference type="HAMAP-Rule" id="MF_00422"/>
    </source>
</evidence>
<name>SECE_RICRH</name>
<comment type="function">
    <text evidence="1">Essential subunit of the Sec protein translocation channel SecYEG. Clamps together the 2 halves of SecY. May contact the channel plug during translocation.</text>
</comment>
<comment type="subunit">
    <text evidence="1">Component of the Sec protein translocase complex. Heterotrimer consisting of SecY, SecE and SecG subunits. The heterotrimers can form oligomers, although 1 heterotrimer is thought to be able to translocate proteins. Interacts with the ribosome. Interacts with SecDF, and other proteins may be involved. Interacts with SecA.</text>
</comment>
<comment type="subcellular location">
    <subcellularLocation>
        <location evidence="1">Cell inner membrane</location>
        <topology evidence="1">Single-pass membrane protein</topology>
    </subcellularLocation>
</comment>
<comment type="similarity">
    <text evidence="1">Belongs to the SecE/SEC61-gamma family.</text>
</comment>
<gene>
    <name evidence="1" type="primary">secE</name>
</gene>
<accession>Q8KHU8</accession>
<reference key="1">
    <citation type="journal article" date="2002" name="Mol. Biol. Evol.">
        <title>Proliferation and deterioration of Rickettsia palindromic elements.</title>
        <authorList>
            <person name="Amiri H."/>
            <person name="Alsmark C.M."/>
            <person name="Andersson S.G.E."/>
        </authorList>
    </citation>
    <scope>NUCLEOTIDE SEQUENCE [GENOMIC DNA]</scope>
    <source>
        <strain>3-7-6</strain>
    </source>
</reference>
<dbReference type="EMBL" id="AF502173">
    <property type="protein sequence ID" value="AAM90920.1"/>
    <property type="molecule type" value="Genomic_DNA"/>
</dbReference>
<dbReference type="RefSeq" id="WP_004996644.1">
    <property type="nucleotide sequence ID" value="NZ_JAPJZV010000014.1"/>
</dbReference>
<dbReference type="SMR" id="Q8KHU8"/>
<dbReference type="GeneID" id="95361890"/>
<dbReference type="OMA" id="DIREVWM"/>
<dbReference type="GO" id="GO:0005886">
    <property type="term" value="C:plasma membrane"/>
    <property type="evidence" value="ECO:0007669"/>
    <property type="project" value="UniProtKB-SubCell"/>
</dbReference>
<dbReference type="GO" id="GO:0008320">
    <property type="term" value="F:protein transmembrane transporter activity"/>
    <property type="evidence" value="ECO:0007669"/>
    <property type="project" value="UniProtKB-UniRule"/>
</dbReference>
<dbReference type="GO" id="GO:0065002">
    <property type="term" value="P:intracellular protein transmembrane transport"/>
    <property type="evidence" value="ECO:0007669"/>
    <property type="project" value="UniProtKB-UniRule"/>
</dbReference>
<dbReference type="GO" id="GO:0009306">
    <property type="term" value="P:protein secretion"/>
    <property type="evidence" value="ECO:0007669"/>
    <property type="project" value="UniProtKB-UniRule"/>
</dbReference>
<dbReference type="GO" id="GO:0006605">
    <property type="term" value="P:protein targeting"/>
    <property type="evidence" value="ECO:0007669"/>
    <property type="project" value="UniProtKB-UniRule"/>
</dbReference>
<dbReference type="GO" id="GO:0043952">
    <property type="term" value="P:protein transport by the Sec complex"/>
    <property type="evidence" value="ECO:0007669"/>
    <property type="project" value="UniProtKB-UniRule"/>
</dbReference>
<dbReference type="Gene3D" id="1.20.5.1030">
    <property type="entry name" value="Preprotein translocase secy subunit"/>
    <property type="match status" value="1"/>
</dbReference>
<dbReference type="HAMAP" id="MF_00422">
    <property type="entry name" value="SecE"/>
    <property type="match status" value="1"/>
</dbReference>
<dbReference type="InterPro" id="IPR005807">
    <property type="entry name" value="SecE_bac"/>
</dbReference>
<dbReference type="InterPro" id="IPR038379">
    <property type="entry name" value="SecE_sf"/>
</dbReference>
<dbReference type="InterPro" id="IPR001901">
    <property type="entry name" value="Translocase_SecE/Sec61-g"/>
</dbReference>
<dbReference type="NCBIfam" id="TIGR00964">
    <property type="entry name" value="secE_bact"/>
    <property type="match status" value="1"/>
</dbReference>
<dbReference type="PANTHER" id="PTHR33910">
    <property type="entry name" value="PROTEIN TRANSLOCASE SUBUNIT SECE"/>
    <property type="match status" value="1"/>
</dbReference>
<dbReference type="PANTHER" id="PTHR33910:SF1">
    <property type="entry name" value="PROTEIN TRANSLOCASE SUBUNIT SECE"/>
    <property type="match status" value="1"/>
</dbReference>
<dbReference type="Pfam" id="PF00584">
    <property type="entry name" value="SecE"/>
    <property type="match status" value="1"/>
</dbReference>
<dbReference type="PROSITE" id="PS01067">
    <property type="entry name" value="SECE_SEC61G"/>
    <property type="match status" value="1"/>
</dbReference>
<keyword id="KW-0997">Cell inner membrane</keyword>
<keyword id="KW-1003">Cell membrane</keyword>
<keyword id="KW-0472">Membrane</keyword>
<keyword id="KW-0653">Protein transport</keyword>
<keyword id="KW-0811">Translocation</keyword>
<keyword id="KW-0812">Transmembrane</keyword>
<keyword id="KW-1133">Transmembrane helix</keyword>
<keyword id="KW-0813">Transport</keyword>
<organism>
    <name type="scientific">Rickettsia rhipicephali</name>
    <dbReference type="NCBI Taxonomy" id="33992"/>
    <lineage>
        <taxon>Bacteria</taxon>
        <taxon>Pseudomonadati</taxon>
        <taxon>Pseudomonadota</taxon>
        <taxon>Alphaproteobacteria</taxon>
        <taxon>Rickettsiales</taxon>
        <taxon>Rickettsiaceae</taxon>
        <taxon>Rickettsieae</taxon>
        <taxon>Rickettsia</taxon>
        <taxon>spotted fever group</taxon>
    </lineage>
</organism>
<feature type="chain" id="PRO_0000273143" description="Protein translocase subunit SecE">
    <location>
        <begin position="1"/>
        <end position="66"/>
    </location>
</feature>
<feature type="transmembrane region" description="Helical" evidence="1">
    <location>
        <begin position="29"/>
        <end position="49"/>
    </location>
</feature>
<sequence>MFKEYKIYKFFEQVKQETYKVVWPTRKELVASTLVVVVAVFIFSLICLVLDYSIHNIMQLLLNIGK</sequence>
<protein>
    <recommendedName>
        <fullName evidence="1">Protein translocase subunit SecE</fullName>
    </recommendedName>
</protein>
<proteinExistence type="inferred from homology"/>